<evidence type="ECO:0000255" key="1">
    <source>
        <dbReference type="HAMAP-Rule" id="MF_01225"/>
    </source>
</evidence>
<evidence type="ECO:0000255" key="2">
    <source>
        <dbReference type="PROSITE-ProRule" id="PRU01266"/>
    </source>
</evidence>
<keyword id="KW-0004">4Fe-4S</keyword>
<keyword id="KW-0342">GTP-binding</keyword>
<keyword id="KW-0408">Iron</keyword>
<keyword id="KW-0411">Iron-sulfur</keyword>
<keyword id="KW-0456">Lyase</keyword>
<keyword id="KW-0479">Metal-binding</keyword>
<keyword id="KW-0501">Molybdenum cofactor biosynthesis</keyword>
<keyword id="KW-0547">Nucleotide-binding</keyword>
<keyword id="KW-0949">S-adenosyl-L-methionine</keyword>
<dbReference type="EC" id="4.1.99.22" evidence="1"/>
<dbReference type="EMBL" id="CP000110">
    <property type="protein sequence ID" value="ABB36365.1"/>
    <property type="molecule type" value="Genomic_DNA"/>
</dbReference>
<dbReference type="RefSeq" id="WP_011365560.1">
    <property type="nucleotide sequence ID" value="NC_007516.1"/>
</dbReference>
<dbReference type="SMR" id="Q3AGB7"/>
<dbReference type="STRING" id="110662.Syncc9605_2640"/>
<dbReference type="KEGG" id="syd:Syncc9605_2640"/>
<dbReference type="eggNOG" id="COG2896">
    <property type="taxonomic scope" value="Bacteria"/>
</dbReference>
<dbReference type="HOGENOM" id="CLU_009273_0_1_3"/>
<dbReference type="OrthoDB" id="9763993at2"/>
<dbReference type="UniPathway" id="UPA00344"/>
<dbReference type="GO" id="GO:0051539">
    <property type="term" value="F:4 iron, 4 sulfur cluster binding"/>
    <property type="evidence" value="ECO:0007669"/>
    <property type="project" value="UniProtKB-UniRule"/>
</dbReference>
<dbReference type="GO" id="GO:0061799">
    <property type="term" value="F:cyclic pyranopterin monophosphate synthase activity"/>
    <property type="evidence" value="ECO:0007669"/>
    <property type="project" value="TreeGrafter"/>
</dbReference>
<dbReference type="GO" id="GO:0061798">
    <property type="term" value="F:GTP 3',8'-cyclase activity"/>
    <property type="evidence" value="ECO:0007669"/>
    <property type="project" value="UniProtKB-UniRule"/>
</dbReference>
<dbReference type="GO" id="GO:0005525">
    <property type="term" value="F:GTP binding"/>
    <property type="evidence" value="ECO:0007669"/>
    <property type="project" value="UniProtKB-UniRule"/>
</dbReference>
<dbReference type="GO" id="GO:0046872">
    <property type="term" value="F:metal ion binding"/>
    <property type="evidence" value="ECO:0007669"/>
    <property type="project" value="UniProtKB-KW"/>
</dbReference>
<dbReference type="GO" id="GO:1904047">
    <property type="term" value="F:S-adenosyl-L-methionine binding"/>
    <property type="evidence" value="ECO:0007669"/>
    <property type="project" value="UniProtKB-UniRule"/>
</dbReference>
<dbReference type="GO" id="GO:0006777">
    <property type="term" value="P:Mo-molybdopterin cofactor biosynthetic process"/>
    <property type="evidence" value="ECO:0007669"/>
    <property type="project" value="UniProtKB-UniRule"/>
</dbReference>
<dbReference type="CDD" id="cd01335">
    <property type="entry name" value="Radical_SAM"/>
    <property type="match status" value="1"/>
</dbReference>
<dbReference type="CDD" id="cd21117">
    <property type="entry name" value="Twitch_MoaA"/>
    <property type="match status" value="1"/>
</dbReference>
<dbReference type="Gene3D" id="3.20.20.70">
    <property type="entry name" value="Aldolase class I"/>
    <property type="match status" value="1"/>
</dbReference>
<dbReference type="HAMAP" id="MF_01225_B">
    <property type="entry name" value="MoaA_B"/>
    <property type="match status" value="1"/>
</dbReference>
<dbReference type="InterPro" id="IPR013785">
    <property type="entry name" value="Aldolase_TIM"/>
</dbReference>
<dbReference type="InterPro" id="IPR013483">
    <property type="entry name" value="MoaA"/>
</dbReference>
<dbReference type="InterPro" id="IPR010505">
    <property type="entry name" value="MoaA_twitch"/>
</dbReference>
<dbReference type="InterPro" id="IPR050105">
    <property type="entry name" value="MoCo_biosynth_MoaA/MoaC"/>
</dbReference>
<dbReference type="InterPro" id="IPR007197">
    <property type="entry name" value="rSAM"/>
</dbReference>
<dbReference type="PANTHER" id="PTHR22960:SF0">
    <property type="entry name" value="MOLYBDENUM COFACTOR BIOSYNTHESIS PROTEIN 1"/>
    <property type="match status" value="1"/>
</dbReference>
<dbReference type="PANTHER" id="PTHR22960">
    <property type="entry name" value="MOLYBDOPTERIN COFACTOR SYNTHESIS PROTEIN A"/>
    <property type="match status" value="1"/>
</dbReference>
<dbReference type="Pfam" id="PF06463">
    <property type="entry name" value="Mob_synth_C"/>
    <property type="match status" value="1"/>
</dbReference>
<dbReference type="Pfam" id="PF04055">
    <property type="entry name" value="Radical_SAM"/>
    <property type="match status" value="1"/>
</dbReference>
<dbReference type="SFLD" id="SFLDG01383">
    <property type="entry name" value="cyclic_pyranopterin_phosphate"/>
    <property type="match status" value="1"/>
</dbReference>
<dbReference type="SFLD" id="SFLDG01216">
    <property type="entry name" value="thioether_bond_formation_requi"/>
    <property type="match status" value="1"/>
</dbReference>
<dbReference type="SUPFAM" id="SSF102114">
    <property type="entry name" value="Radical SAM enzymes"/>
    <property type="match status" value="1"/>
</dbReference>
<dbReference type="PROSITE" id="PS51918">
    <property type="entry name" value="RADICAL_SAM"/>
    <property type="match status" value="1"/>
</dbReference>
<reference key="1">
    <citation type="submission" date="2005-07" db="EMBL/GenBank/DDBJ databases">
        <title>Complete sequence of Synechococcus sp. CC9605.</title>
        <authorList>
            <consortium name="US DOE Joint Genome Institute"/>
            <person name="Copeland A."/>
            <person name="Lucas S."/>
            <person name="Lapidus A."/>
            <person name="Barry K."/>
            <person name="Detter J.C."/>
            <person name="Glavina T."/>
            <person name="Hammon N."/>
            <person name="Israni S."/>
            <person name="Pitluck S."/>
            <person name="Schmutz J."/>
            <person name="Martinez M."/>
            <person name="Larimer F."/>
            <person name="Land M."/>
            <person name="Kyrpides N."/>
            <person name="Ivanova N."/>
            <person name="Richardson P."/>
        </authorList>
    </citation>
    <scope>NUCLEOTIDE SEQUENCE [LARGE SCALE GENOMIC DNA]</scope>
    <source>
        <strain>CC9605</strain>
    </source>
</reference>
<name>MOAA_SYNSC</name>
<feature type="chain" id="PRO_1000054236" description="GTP 3',8-cyclase">
    <location>
        <begin position="1"/>
        <end position="347"/>
    </location>
</feature>
<feature type="domain" description="Radical SAM core" evidence="2">
    <location>
        <begin position="10"/>
        <end position="242"/>
    </location>
</feature>
<feature type="binding site" evidence="1">
    <location>
        <position position="19"/>
    </location>
    <ligand>
        <name>GTP</name>
        <dbReference type="ChEBI" id="CHEBI:37565"/>
    </ligand>
</feature>
<feature type="binding site" evidence="1">
    <location>
        <position position="26"/>
    </location>
    <ligand>
        <name>[4Fe-4S] cluster</name>
        <dbReference type="ChEBI" id="CHEBI:49883"/>
        <label>1</label>
        <note>4Fe-4S-S-AdoMet</note>
    </ligand>
</feature>
<feature type="binding site" evidence="1">
    <location>
        <position position="30"/>
    </location>
    <ligand>
        <name>[4Fe-4S] cluster</name>
        <dbReference type="ChEBI" id="CHEBI:49883"/>
        <label>1</label>
        <note>4Fe-4S-S-AdoMet</note>
    </ligand>
</feature>
<feature type="binding site" evidence="1">
    <location>
        <position position="32"/>
    </location>
    <ligand>
        <name>S-adenosyl-L-methionine</name>
        <dbReference type="ChEBI" id="CHEBI:59789"/>
    </ligand>
</feature>
<feature type="binding site" evidence="1">
    <location>
        <position position="33"/>
    </location>
    <ligand>
        <name>[4Fe-4S] cluster</name>
        <dbReference type="ChEBI" id="CHEBI:49883"/>
        <label>1</label>
        <note>4Fe-4S-S-AdoMet</note>
    </ligand>
</feature>
<feature type="binding site" evidence="1">
    <location>
        <position position="65"/>
    </location>
    <ligand>
        <name>GTP</name>
        <dbReference type="ChEBI" id="CHEBI:37565"/>
    </ligand>
</feature>
<feature type="binding site" evidence="1">
    <location>
        <position position="69"/>
    </location>
    <ligand>
        <name>S-adenosyl-L-methionine</name>
        <dbReference type="ChEBI" id="CHEBI:59789"/>
    </ligand>
</feature>
<feature type="binding site" evidence="1">
    <location>
        <position position="104"/>
    </location>
    <ligand>
        <name>GTP</name>
        <dbReference type="ChEBI" id="CHEBI:37565"/>
    </ligand>
</feature>
<feature type="binding site" evidence="1">
    <location>
        <position position="129"/>
    </location>
    <ligand>
        <name>S-adenosyl-L-methionine</name>
        <dbReference type="ChEBI" id="CHEBI:59789"/>
    </ligand>
</feature>
<feature type="binding site" evidence="1">
    <location>
        <position position="178"/>
    </location>
    <ligand>
        <name>GTP</name>
        <dbReference type="ChEBI" id="CHEBI:37565"/>
    </ligand>
</feature>
<feature type="binding site" evidence="1">
    <location>
        <position position="212"/>
    </location>
    <ligand>
        <name>S-adenosyl-L-methionine</name>
        <dbReference type="ChEBI" id="CHEBI:59789"/>
    </ligand>
</feature>
<feature type="binding site" evidence="1">
    <location>
        <position position="275"/>
    </location>
    <ligand>
        <name>[4Fe-4S] cluster</name>
        <dbReference type="ChEBI" id="CHEBI:49883"/>
        <label>2</label>
        <note>4Fe-4S-substrate</note>
    </ligand>
</feature>
<feature type="binding site" evidence="1">
    <location>
        <position position="278"/>
    </location>
    <ligand>
        <name>[4Fe-4S] cluster</name>
        <dbReference type="ChEBI" id="CHEBI:49883"/>
        <label>2</label>
        <note>4Fe-4S-substrate</note>
    </ligand>
</feature>
<feature type="binding site" evidence="1">
    <location>
        <begin position="280"/>
        <end position="282"/>
    </location>
    <ligand>
        <name>GTP</name>
        <dbReference type="ChEBI" id="CHEBI:37565"/>
    </ligand>
</feature>
<feature type="binding site" evidence="1">
    <location>
        <position position="292"/>
    </location>
    <ligand>
        <name>[4Fe-4S] cluster</name>
        <dbReference type="ChEBI" id="CHEBI:49883"/>
        <label>2</label>
        <note>4Fe-4S-substrate</note>
    </ligand>
</feature>
<gene>
    <name evidence="1" type="primary">moaA</name>
    <name type="ordered locus">Syncc9605_2640</name>
</gene>
<proteinExistence type="inferred from homology"/>
<sequence>MSTSLPLADRLNRPIGVLRLSLTARCNLACPYCCPDVEEPPGLLTLEQQIRVIRVATRLGVQTLRLTGGEPLLSRRLLPLLEAVAQARRDRSDPMAGLQAVALTSNGVLLSEPMGRALRAAGLDRITISLDAAEGEAAARMAGLQGGAVAGERLVRQVQDGIAAAFAAGFDPSRGELKLNAVIQRGINDDQLLPLAALARQRGMELRLIEYMDVGNRNQWTLDQVLPAAQMVERINARWPLEPLGRPRGGTARRWRYGDGAGSIGVISSISEPFCGDCNRLRVTADGQAFTCLFSAEGTDLKPALASDLQLEQAMRQLWQRRQDRYSEERDPAAAASTHAEMAYLGG</sequence>
<accession>Q3AGB7</accession>
<organism>
    <name type="scientific">Synechococcus sp. (strain CC9605)</name>
    <dbReference type="NCBI Taxonomy" id="110662"/>
    <lineage>
        <taxon>Bacteria</taxon>
        <taxon>Bacillati</taxon>
        <taxon>Cyanobacteriota</taxon>
        <taxon>Cyanophyceae</taxon>
        <taxon>Synechococcales</taxon>
        <taxon>Synechococcaceae</taxon>
        <taxon>Synechococcus</taxon>
    </lineage>
</organism>
<comment type="function">
    <text evidence="1">Catalyzes the cyclization of GTP to (8S)-3',8-cyclo-7,8-dihydroguanosine 5'-triphosphate.</text>
</comment>
<comment type="catalytic activity">
    <reaction evidence="1">
        <text>GTP + AH2 + S-adenosyl-L-methionine = (8S)-3',8-cyclo-7,8-dihydroguanosine 5'-triphosphate + 5'-deoxyadenosine + L-methionine + A + H(+)</text>
        <dbReference type="Rhea" id="RHEA:49576"/>
        <dbReference type="ChEBI" id="CHEBI:13193"/>
        <dbReference type="ChEBI" id="CHEBI:15378"/>
        <dbReference type="ChEBI" id="CHEBI:17319"/>
        <dbReference type="ChEBI" id="CHEBI:17499"/>
        <dbReference type="ChEBI" id="CHEBI:37565"/>
        <dbReference type="ChEBI" id="CHEBI:57844"/>
        <dbReference type="ChEBI" id="CHEBI:59789"/>
        <dbReference type="ChEBI" id="CHEBI:131766"/>
        <dbReference type="EC" id="4.1.99.22"/>
    </reaction>
</comment>
<comment type="cofactor">
    <cofactor evidence="1">
        <name>[4Fe-4S] cluster</name>
        <dbReference type="ChEBI" id="CHEBI:49883"/>
    </cofactor>
    <text evidence="1">Binds 2 [4Fe-4S] clusters. Binds 1 [4Fe-4S] cluster coordinated with 3 cysteines and an exchangeable S-adenosyl-L-methionine and 1 [4Fe-4S] cluster coordinated with 3 cysteines and the GTP-derived substrate.</text>
</comment>
<comment type="pathway">
    <text evidence="1">Cofactor biosynthesis; molybdopterin biosynthesis.</text>
</comment>
<comment type="subunit">
    <text evidence="1">Monomer and homodimer.</text>
</comment>
<comment type="similarity">
    <text evidence="1">Belongs to the radical SAM superfamily. MoaA family.</text>
</comment>
<protein>
    <recommendedName>
        <fullName evidence="1">GTP 3',8-cyclase</fullName>
        <ecNumber evidence="1">4.1.99.22</ecNumber>
    </recommendedName>
    <alternativeName>
        <fullName evidence="1">Molybdenum cofactor biosynthesis protein A</fullName>
    </alternativeName>
</protein>